<proteinExistence type="inferred from homology"/>
<feature type="transit peptide" description="Mitochondrion" evidence="1">
    <location>
        <begin position="1"/>
        <end position="59"/>
    </location>
</feature>
<feature type="chain" id="PRO_0000385577" description="Elongation factor G, mitochondrial">
    <location>
        <begin position="60"/>
        <end position="800"/>
    </location>
</feature>
<feature type="domain" description="tr-type G">
    <location>
        <begin position="99"/>
        <end position="385"/>
    </location>
</feature>
<feature type="binding site" evidence="1">
    <location>
        <begin position="108"/>
        <end position="115"/>
    </location>
    <ligand>
        <name>GTP</name>
        <dbReference type="ChEBI" id="CHEBI:37565"/>
    </ligand>
</feature>
<feature type="binding site" evidence="1">
    <location>
        <begin position="183"/>
        <end position="187"/>
    </location>
    <ligand>
        <name>GTP</name>
        <dbReference type="ChEBI" id="CHEBI:37565"/>
    </ligand>
</feature>
<feature type="binding site" evidence="1">
    <location>
        <begin position="237"/>
        <end position="240"/>
    </location>
    <ligand>
        <name>GTP</name>
        <dbReference type="ChEBI" id="CHEBI:37565"/>
    </ligand>
</feature>
<evidence type="ECO:0000255" key="1">
    <source>
        <dbReference type="HAMAP-Rule" id="MF_03061"/>
    </source>
</evidence>
<evidence type="ECO:0000305" key="2"/>
<sequence length="800" mass="88374">MRVIRAVATLHAGRAAAVRQGVRSVSLGACRAAVETPSLRSAGSQFESRRLFSRSSYLRNANMTAAEIALKQAKELAASNMTPEAAAARMTPEEAKRLARVRNIGIAAHIDSGKTTVTERILFYTGRVKAIHEVRGRDGVGAKMDSMELERERGITIQSAATFADWKKKEKGVEETYHINLIDTPGHIDFTIEVERAMRVLDGAVMVLCAVSGVQSQTITVDRQMKRYNVPRISFVNKMDRMGANPWKAVEQINTKLKIPAAAIQVPIGSEKELEGVVDLIDMKCIRNDGQRGVNLKISKEIPAEIKELCEQKRQELIEKLADVDDEIAEMFLEEQTPTPEQIKAAIRRATIACKFTPVLMGSAIADKGVQPMLDAVCDYLPNPNDTDNTALDRSKGEQPVKLVPYNSLPFVGLAFKLEENPYGQLTYMRVYQGSLKKGAYLYNSRGNKKVRIPRIVRMHSNEMEDVNEIGAGEICAVFGVDCASGDTFTDGGLPYSLSSMYVPDAVMSLSIKPKRSSDADAFSKAMNRFMREDPTFRLHVDEESEETIISGMGELHLEIYVERLRREYKVECETGQPRVSYRETITQKAEFDYLLKRQSGGPGDYARVVGWIEPNPNGGEDNHFESRVVGGTIPDKYISACQKGFQEACIKGPLLGHKVIGSSMVITDGATHVTDSSDYAFNLAAQMAFGKAFTAAGGQVLEPLMKTTISAPAEFQGNILMLMNKRGTIVDTEVGADEFTMVADCSLNAMFGFSTHLRAATQGKGEFSMEFSHYAPAPPHLQKELVQKYQKELEAKRTK</sequence>
<name>EFGM_NEUCR</name>
<dbReference type="EMBL" id="BX842625">
    <property type="protein sequence ID" value="CAE76249.1"/>
    <property type="molecule type" value="Genomic_DNA"/>
</dbReference>
<dbReference type="EMBL" id="CM002236">
    <property type="protein sequence ID" value="EAA36106.2"/>
    <property type="molecule type" value="Genomic_DNA"/>
</dbReference>
<dbReference type="RefSeq" id="XP_965342.2">
    <property type="nucleotide sequence ID" value="XM_960249.3"/>
</dbReference>
<dbReference type="SMR" id="Q7SH14"/>
<dbReference type="FunCoup" id="Q7SH14">
    <property type="interactions" value="653"/>
</dbReference>
<dbReference type="STRING" id="367110.Q7SH14"/>
<dbReference type="PaxDb" id="5141-EFNCRP00000002278"/>
<dbReference type="EnsemblFungi" id="EAA36106">
    <property type="protein sequence ID" value="EAA36106"/>
    <property type="gene ID" value="NCU02955"/>
</dbReference>
<dbReference type="GeneID" id="3881505"/>
<dbReference type="KEGG" id="ncr:NCU02955"/>
<dbReference type="VEuPathDB" id="FungiDB:NCU02955"/>
<dbReference type="HOGENOM" id="CLU_002794_4_1_1"/>
<dbReference type="InParanoid" id="Q7SH14"/>
<dbReference type="OMA" id="GQFAKVQ"/>
<dbReference type="OrthoDB" id="198619at2759"/>
<dbReference type="UniPathway" id="UPA00345"/>
<dbReference type="Proteomes" id="UP000001805">
    <property type="component" value="Chromosome 1, Linkage Group I"/>
</dbReference>
<dbReference type="GO" id="GO:0005739">
    <property type="term" value="C:mitochondrion"/>
    <property type="evidence" value="ECO:0000318"/>
    <property type="project" value="GO_Central"/>
</dbReference>
<dbReference type="GO" id="GO:0005525">
    <property type="term" value="F:GTP binding"/>
    <property type="evidence" value="ECO:0007669"/>
    <property type="project" value="UniProtKB-UniRule"/>
</dbReference>
<dbReference type="GO" id="GO:0003924">
    <property type="term" value="F:GTPase activity"/>
    <property type="evidence" value="ECO:0000318"/>
    <property type="project" value="GO_Central"/>
</dbReference>
<dbReference type="GO" id="GO:0003746">
    <property type="term" value="F:translation elongation factor activity"/>
    <property type="evidence" value="ECO:0000318"/>
    <property type="project" value="GO_Central"/>
</dbReference>
<dbReference type="GO" id="GO:0070125">
    <property type="term" value="P:mitochondrial translational elongation"/>
    <property type="evidence" value="ECO:0000318"/>
    <property type="project" value="GO_Central"/>
</dbReference>
<dbReference type="CDD" id="cd01886">
    <property type="entry name" value="EF-G"/>
    <property type="match status" value="1"/>
</dbReference>
<dbReference type="CDD" id="cd16262">
    <property type="entry name" value="EFG_III"/>
    <property type="match status" value="1"/>
</dbReference>
<dbReference type="CDD" id="cd01434">
    <property type="entry name" value="EFG_mtEFG1_IV"/>
    <property type="match status" value="1"/>
</dbReference>
<dbReference type="CDD" id="cd04097">
    <property type="entry name" value="mtEFG1_C"/>
    <property type="match status" value="1"/>
</dbReference>
<dbReference type="CDD" id="cd04091">
    <property type="entry name" value="mtEFG1_II_like"/>
    <property type="match status" value="1"/>
</dbReference>
<dbReference type="FunFam" id="3.30.70.870:FF:000001">
    <property type="entry name" value="Elongation factor G"/>
    <property type="match status" value="1"/>
</dbReference>
<dbReference type="FunFam" id="2.40.30.10:FF:000022">
    <property type="entry name" value="Elongation factor G, mitochondrial"/>
    <property type="match status" value="1"/>
</dbReference>
<dbReference type="FunFam" id="3.30.70.240:FF:000015">
    <property type="entry name" value="Elongation factor G, mitochondrial"/>
    <property type="match status" value="1"/>
</dbReference>
<dbReference type="FunFam" id="3.40.50.300:FF:000558">
    <property type="entry name" value="Elongation factor G, mitochondrial"/>
    <property type="match status" value="1"/>
</dbReference>
<dbReference type="Gene3D" id="3.30.230.10">
    <property type="match status" value="1"/>
</dbReference>
<dbReference type="Gene3D" id="3.30.70.240">
    <property type="match status" value="1"/>
</dbReference>
<dbReference type="Gene3D" id="3.30.70.870">
    <property type="entry name" value="Elongation Factor G (Translational Gtpase), domain 3"/>
    <property type="match status" value="1"/>
</dbReference>
<dbReference type="Gene3D" id="3.40.50.300">
    <property type="entry name" value="P-loop containing nucleotide triphosphate hydrolases"/>
    <property type="match status" value="1"/>
</dbReference>
<dbReference type="Gene3D" id="2.40.30.10">
    <property type="entry name" value="Translation factors"/>
    <property type="match status" value="1"/>
</dbReference>
<dbReference type="HAMAP" id="MF_00054_B">
    <property type="entry name" value="EF_G_EF_2_B"/>
    <property type="match status" value="1"/>
</dbReference>
<dbReference type="InterPro" id="IPR041095">
    <property type="entry name" value="EFG_II"/>
</dbReference>
<dbReference type="InterPro" id="IPR009022">
    <property type="entry name" value="EFG_III"/>
</dbReference>
<dbReference type="InterPro" id="IPR035647">
    <property type="entry name" value="EFG_III/V"/>
</dbReference>
<dbReference type="InterPro" id="IPR047872">
    <property type="entry name" value="EFG_IV"/>
</dbReference>
<dbReference type="InterPro" id="IPR035649">
    <property type="entry name" value="EFG_V"/>
</dbReference>
<dbReference type="InterPro" id="IPR000640">
    <property type="entry name" value="EFG_V-like"/>
</dbReference>
<dbReference type="InterPro" id="IPR004161">
    <property type="entry name" value="EFTu-like_2"/>
</dbReference>
<dbReference type="InterPro" id="IPR031157">
    <property type="entry name" value="G_TR_CS"/>
</dbReference>
<dbReference type="InterPro" id="IPR027417">
    <property type="entry name" value="P-loop_NTPase"/>
</dbReference>
<dbReference type="InterPro" id="IPR020568">
    <property type="entry name" value="Ribosomal_Su5_D2-typ_SF"/>
</dbReference>
<dbReference type="InterPro" id="IPR014721">
    <property type="entry name" value="Ribsml_uS5_D2-typ_fold_subgr"/>
</dbReference>
<dbReference type="InterPro" id="IPR005225">
    <property type="entry name" value="Small_GTP-bd"/>
</dbReference>
<dbReference type="InterPro" id="IPR000795">
    <property type="entry name" value="T_Tr_GTP-bd_dom"/>
</dbReference>
<dbReference type="InterPro" id="IPR009000">
    <property type="entry name" value="Transl_B-barrel_sf"/>
</dbReference>
<dbReference type="InterPro" id="IPR004540">
    <property type="entry name" value="Transl_elong_EFG/EF2"/>
</dbReference>
<dbReference type="InterPro" id="IPR005517">
    <property type="entry name" value="Transl_elong_EFG/EF2_IV"/>
</dbReference>
<dbReference type="NCBIfam" id="TIGR00484">
    <property type="entry name" value="EF-G"/>
    <property type="match status" value="1"/>
</dbReference>
<dbReference type="NCBIfam" id="NF009381">
    <property type="entry name" value="PRK12740.1-5"/>
    <property type="match status" value="1"/>
</dbReference>
<dbReference type="NCBIfam" id="TIGR00231">
    <property type="entry name" value="small_GTP"/>
    <property type="match status" value="1"/>
</dbReference>
<dbReference type="PANTHER" id="PTHR43636">
    <property type="entry name" value="ELONGATION FACTOR G, MITOCHONDRIAL"/>
    <property type="match status" value="1"/>
</dbReference>
<dbReference type="PANTHER" id="PTHR43636:SF2">
    <property type="entry name" value="ELONGATION FACTOR G, MITOCHONDRIAL"/>
    <property type="match status" value="1"/>
</dbReference>
<dbReference type="Pfam" id="PF00679">
    <property type="entry name" value="EFG_C"/>
    <property type="match status" value="1"/>
</dbReference>
<dbReference type="Pfam" id="PF14492">
    <property type="entry name" value="EFG_III"/>
    <property type="match status" value="1"/>
</dbReference>
<dbReference type="Pfam" id="PF03764">
    <property type="entry name" value="EFG_IV"/>
    <property type="match status" value="1"/>
</dbReference>
<dbReference type="Pfam" id="PF00009">
    <property type="entry name" value="GTP_EFTU"/>
    <property type="match status" value="1"/>
</dbReference>
<dbReference type="Pfam" id="PF03144">
    <property type="entry name" value="GTP_EFTU_D2"/>
    <property type="match status" value="1"/>
</dbReference>
<dbReference type="PRINTS" id="PR00315">
    <property type="entry name" value="ELONGATNFCT"/>
</dbReference>
<dbReference type="SMART" id="SM00838">
    <property type="entry name" value="EFG_C"/>
    <property type="match status" value="1"/>
</dbReference>
<dbReference type="SMART" id="SM00889">
    <property type="entry name" value="EFG_IV"/>
    <property type="match status" value="1"/>
</dbReference>
<dbReference type="SUPFAM" id="SSF54980">
    <property type="entry name" value="EF-G C-terminal domain-like"/>
    <property type="match status" value="2"/>
</dbReference>
<dbReference type="SUPFAM" id="SSF52540">
    <property type="entry name" value="P-loop containing nucleoside triphosphate hydrolases"/>
    <property type="match status" value="1"/>
</dbReference>
<dbReference type="SUPFAM" id="SSF54211">
    <property type="entry name" value="Ribosomal protein S5 domain 2-like"/>
    <property type="match status" value="1"/>
</dbReference>
<dbReference type="SUPFAM" id="SSF50447">
    <property type="entry name" value="Translation proteins"/>
    <property type="match status" value="1"/>
</dbReference>
<dbReference type="PROSITE" id="PS00301">
    <property type="entry name" value="G_TR_1"/>
    <property type="match status" value="1"/>
</dbReference>
<dbReference type="PROSITE" id="PS51722">
    <property type="entry name" value="G_TR_2"/>
    <property type="match status" value="1"/>
</dbReference>
<reference key="1">
    <citation type="journal article" date="2003" name="Nucleic Acids Res.">
        <title>What's in the genome of a filamentous fungus? Analysis of the Neurospora genome sequence.</title>
        <authorList>
            <person name="Mannhaupt G."/>
            <person name="Montrone C."/>
            <person name="Haase D."/>
            <person name="Mewes H.-W."/>
            <person name="Aign V."/>
            <person name="Hoheisel J.D."/>
            <person name="Fartmann B."/>
            <person name="Nyakatura G."/>
            <person name="Kempken F."/>
            <person name="Maier J."/>
            <person name="Schulte U."/>
        </authorList>
    </citation>
    <scope>NUCLEOTIDE SEQUENCE [LARGE SCALE GENOMIC DNA]</scope>
    <source>
        <strain>ATCC 24698 / 74-OR23-1A / CBS 708.71 / DSM 1257 / FGSC 987</strain>
    </source>
</reference>
<reference key="2">
    <citation type="journal article" date="2003" name="Nature">
        <title>The genome sequence of the filamentous fungus Neurospora crassa.</title>
        <authorList>
            <person name="Galagan J.E."/>
            <person name="Calvo S.E."/>
            <person name="Borkovich K.A."/>
            <person name="Selker E.U."/>
            <person name="Read N.D."/>
            <person name="Jaffe D.B."/>
            <person name="FitzHugh W."/>
            <person name="Ma L.-J."/>
            <person name="Smirnov S."/>
            <person name="Purcell S."/>
            <person name="Rehman B."/>
            <person name="Elkins T."/>
            <person name="Engels R."/>
            <person name="Wang S."/>
            <person name="Nielsen C.B."/>
            <person name="Butler J."/>
            <person name="Endrizzi M."/>
            <person name="Qui D."/>
            <person name="Ianakiev P."/>
            <person name="Bell-Pedersen D."/>
            <person name="Nelson M.A."/>
            <person name="Werner-Washburne M."/>
            <person name="Selitrennikoff C.P."/>
            <person name="Kinsey J.A."/>
            <person name="Braun E.L."/>
            <person name="Zelter A."/>
            <person name="Schulte U."/>
            <person name="Kothe G.O."/>
            <person name="Jedd G."/>
            <person name="Mewes H.-W."/>
            <person name="Staben C."/>
            <person name="Marcotte E."/>
            <person name="Greenberg D."/>
            <person name="Roy A."/>
            <person name="Foley K."/>
            <person name="Naylor J."/>
            <person name="Stange-Thomann N."/>
            <person name="Barrett R."/>
            <person name="Gnerre S."/>
            <person name="Kamal M."/>
            <person name="Kamvysselis M."/>
            <person name="Mauceli E.W."/>
            <person name="Bielke C."/>
            <person name="Rudd S."/>
            <person name="Frishman D."/>
            <person name="Krystofova S."/>
            <person name="Rasmussen C."/>
            <person name="Metzenberg R.L."/>
            <person name="Perkins D.D."/>
            <person name="Kroken S."/>
            <person name="Cogoni C."/>
            <person name="Macino G."/>
            <person name="Catcheside D.E.A."/>
            <person name="Li W."/>
            <person name="Pratt R.J."/>
            <person name="Osmani S.A."/>
            <person name="DeSouza C.P.C."/>
            <person name="Glass N.L."/>
            <person name="Orbach M.J."/>
            <person name="Berglund J.A."/>
            <person name="Voelker R."/>
            <person name="Yarden O."/>
            <person name="Plamann M."/>
            <person name="Seiler S."/>
            <person name="Dunlap J.C."/>
            <person name="Radford A."/>
            <person name="Aramayo R."/>
            <person name="Natvig D.O."/>
            <person name="Alex L.A."/>
            <person name="Mannhaupt G."/>
            <person name="Ebbole D.J."/>
            <person name="Freitag M."/>
            <person name="Paulsen I."/>
            <person name="Sachs M.S."/>
            <person name="Lander E.S."/>
            <person name="Nusbaum C."/>
            <person name="Birren B.W."/>
        </authorList>
    </citation>
    <scope>NUCLEOTIDE SEQUENCE [LARGE SCALE GENOMIC DNA]</scope>
    <source>
        <strain>ATCC 24698 / 74-OR23-1A / CBS 708.71 / DSM 1257 / FGSC 987</strain>
    </source>
</reference>
<organism>
    <name type="scientific">Neurospora crassa (strain ATCC 24698 / 74-OR23-1A / CBS 708.71 / DSM 1257 / FGSC 987)</name>
    <dbReference type="NCBI Taxonomy" id="367110"/>
    <lineage>
        <taxon>Eukaryota</taxon>
        <taxon>Fungi</taxon>
        <taxon>Dikarya</taxon>
        <taxon>Ascomycota</taxon>
        <taxon>Pezizomycotina</taxon>
        <taxon>Sordariomycetes</taxon>
        <taxon>Sordariomycetidae</taxon>
        <taxon>Sordariales</taxon>
        <taxon>Sordariaceae</taxon>
        <taxon>Neurospora</taxon>
    </lineage>
</organism>
<gene>
    <name type="primary">mef1</name>
    <name type="ORF">B16D18.090</name>
    <name type="ORF">NCU02955</name>
</gene>
<comment type="function">
    <text evidence="1">Mitochondrial GTPase that catalyzes the GTP-dependent ribosomal translocation step during translation elongation. During this step, the ribosome changes from the pre-translocational (PRE) to the post-translocational (POST) state as the newly formed A-site-bound peptidyl-tRNA and P-site-bound deacylated tRNA move to the P and E sites, respectively. Catalyzes the coordinated movement of the two tRNA molecules, the mRNA and conformational changes in the ribosome.</text>
</comment>
<comment type="pathway">
    <text evidence="1">Protein biosynthesis; polypeptide chain elongation.</text>
</comment>
<comment type="subcellular location">
    <subcellularLocation>
        <location evidence="1">Mitochondrion</location>
    </subcellularLocation>
</comment>
<comment type="similarity">
    <text evidence="2">Belongs to the TRAFAC class translation factor GTPase superfamily. Classic translation factor GTPase family. EF-G/EF-2 subfamily.</text>
</comment>
<accession>Q7SH14</accession>
<accession>Q6MVP7</accession>
<protein>
    <recommendedName>
        <fullName evidence="1">Elongation factor G, mitochondrial</fullName>
        <shortName evidence="1">EF-Gmt</shortName>
    </recommendedName>
    <alternativeName>
        <fullName evidence="1">Elongation factor G 1, mitochondrial</fullName>
        <shortName evidence="1">mEF-G 1</shortName>
    </alternativeName>
    <alternativeName>
        <fullName evidence="1">Elongation factor G1</fullName>
    </alternativeName>
</protein>
<keyword id="KW-0251">Elongation factor</keyword>
<keyword id="KW-0342">GTP-binding</keyword>
<keyword id="KW-0496">Mitochondrion</keyword>
<keyword id="KW-0547">Nucleotide-binding</keyword>
<keyword id="KW-0648">Protein biosynthesis</keyword>
<keyword id="KW-1185">Reference proteome</keyword>
<keyword id="KW-0809">Transit peptide</keyword>